<dbReference type="EMBL" id="CP000783">
    <property type="protein sequence ID" value="ABU75339.1"/>
    <property type="molecule type" value="Genomic_DNA"/>
</dbReference>
<dbReference type="RefSeq" id="WP_004388622.1">
    <property type="nucleotide sequence ID" value="NC_009778.1"/>
</dbReference>
<dbReference type="SMR" id="A7MPF7"/>
<dbReference type="GeneID" id="92804614"/>
<dbReference type="KEGG" id="esa:ESA_00030"/>
<dbReference type="HOGENOM" id="CLU_092403_0_2_6"/>
<dbReference type="Proteomes" id="UP000000260">
    <property type="component" value="Chromosome"/>
</dbReference>
<dbReference type="GO" id="GO:0015935">
    <property type="term" value="C:small ribosomal subunit"/>
    <property type="evidence" value="ECO:0007669"/>
    <property type="project" value="InterPro"/>
</dbReference>
<dbReference type="GO" id="GO:0019843">
    <property type="term" value="F:rRNA binding"/>
    <property type="evidence" value="ECO:0007669"/>
    <property type="project" value="UniProtKB-UniRule"/>
</dbReference>
<dbReference type="GO" id="GO:0003735">
    <property type="term" value="F:structural constituent of ribosome"/>
    <property type="evidence" value="ECO:0007669"/>
    <property type="project" value="InterPro"/>
</dbReference>
<dbReference type="GO" id="GO:0042274">
    <property type="term" value="P:ribosomal small subunit biogenesis"/>
    <property type="evidence" value="ECO:0007669"/>
    <property type="project" value="TreeGrafter"/>
</dbReference>
<dbReference type="GO" id="GO:0006412">
    <property type="term" value="P:translation"/>
    <property type="evidence" value="ECO:0007669"/>
    <property type="project" value="UniProtKB-UniRule"/>
</dbReference>
<dbReference type="CDD" id="cd00165">
    <property type="entry name" value="S4"/>
    <property type="match status" value="1"/>
</dbReference>
<dbReference type="FunFam" id="1.10.1050.10:FF:000001">
    <property type="entry name" value="30S ribosomal protein S4"/>
    <property type="match status" value="1"/>
</dbReference>
<dbReference type="FunFam" id="3.10.290.10:FF:000001">
    <property type="entry name" value="30S ribosomal protein S4"/>
    <property type="match status" value="1"/>
</dbReference>
<dbReference type="Gene3D" id="1.10.1050.10">
    <property type="entry name" value="Ribosomal Protein S4 Delta 41, Chain A, domain 1"/>
    <property type="match status" value="1"/>
</dbReference>
<dbReference type="Gene3D" id="3.10.290.10">
    <property type="entry name" value="RNA-binding S4 domain"/>
    <property type="match status" value="1"/>
</dbReference>
<dbReference type="HAMAP" id="MF_01306_B">
    <property type="entry name" value="Ribosomal_uS4_B"/>
    <property type="match status" value="1"/>
</dbReference>
<dbReference type="InterPro" id="IPR022801">
    <property type="entry name" value="Ribosomal_uS4"/>
</dbReference>
<dbReference type="InterPro" id="IPR005709">
    <property type="entry name" value="Ribosomal_uS4_bac-type"/>
</dbReference>
<dbReference type="InterPro" id="IPR018079">
    <property type="entry name" value="Ribosomal_uS4_CS"/>
</dbReference>
<dbReference type="InterPro" id="IPR001912">
    <property type="entry name" value="Ribosomal_uS4_N"/>
</dbReference>
<dbReference type="InterPro" id="IPR002942">
    <property type="entry name" value="S4_RNA-bd"/>
</dbReference>
<dbReference type="InterPro" id="IPR036986">
    <property type="entry name" value="S4_RNA-bd_sf"/>
</dbReference>
<dbReference type="NCBIfam" id="NF003717">
    <property type="entry name" value="PRK05327.1"/>
    <property type="match status" value="1"/>
</dbReference>
<dbReference type="NCBIfam" id="TIGR01017">
    <property type="entry name" value="rpsD_bact"/>
    <property type="match status" value="1"/>
</dbReference>
<dbReference type="PANTHER" id="PTHR11831">
    <property type="entry name" value="30S 40S RIBOSOMAL PROTEIN"/>
    <property type="match status" value="1"/>
</dbReference>
<dbReference type="PANTHER" id="PTHR11831:SF4">
    <property type="entry name" value="SMALL RIBOSOMAL SUBUNIT PROTEIN US4M"/>
    <property type="match status" value="1"/>
</dbReference>
<dbReference type="Pfam" id="PF00163">
    <property type="entry name" value="Ribosomal_S4"/>
    <property type="match status" value="1"/>
</dbReference>
<dbReference type="Pfam" id="PF01479">
    <property type="entry name" value="S4"/>
    <property type="match status" value="1"/>
</dbReference>
<dbReference type="SMART" id="SM01390">
    <property type="entry name" value="Ribosomal_S4"/>
    <property type="match status" value="1"/>
</dbReference>
<dbReference type="SMART" id="SM00363">
    <property type="entry name" value="S4"/>
    <property type="match status" value="1"/>
</dbReference>
<dbReference type="SUPFAM" id="SSF55174">
    <property type="entry name" value="Alpha-L RNA-binding motif"/>
    <property type="match status" value="1"/>
</dbReference>
<dbReference type="PROSITE" id="PS00632">
    <property type="entry name" value="RIBOSOMAL_S4"/>
    <property type="match status" value="1"/>
</dbReference>
<dbReference type="PROSITE" id="PS50889">
    <property type="entry name" value="S4"/>
    <property type="match status" value="1"/>
</dbReference>
<reference key="1">
    <citation type="journal article" date="2010" name="PLoS ONE">
        <title>Genome sequence of Cronobacter sakazakii BAA-894 and comparative genomic hybridization analysis with other Cronobacter species.</title>
        <authorList>
            <person name="Kucerova E."/>
            <person name="Clifton S.W."/>
            <person name="Xia X.Q."/>
            <person name="Long F."/>
            <person name="Porwollik S."/>
            <person name="Fulton L."/>
            <person name="Fronick C."/>
            <person name="Minx P."/>
            <person name="Kyung K."/>
            <person name="Warren W."/>
            <person name="Fulton R."/>
            <person name="Feng D."/>
            <person name="Wollam A."/>
            <person name="Shah N."/>
            <person name="Bhonagiri V."/>
            <person name="Nash W.E."/>
            <person name="Hallsworth-Pepin K."/>
            <person name="Wilson R.K."/>
            <person name="McClelland M."/>
            <person name="Forsythe S.J."/>
        </authorList>
    </citation>
    <scope>NUCLEOTIDE SEQUENCE [LARGE SCALE GENOMIC DNA]</scope>
    <source>
        <strain>ATCC BAA-894</strain>
    </source>
</reference>
<sequence length="206" mass="23469">MARYLGPKLKLSRREGTDLFLKSGVRAIDTKCKIEQAPGQHGARKPRLSDYGVQLREKQKVRRIYGVLERQFRNYYKEAARLKGNTGENLLALLEGRLDNVVYRMGFGATRAEARQLVSHKAIMVNGRVVNIASYQVSPNDVVSVREKAKKQSRVKAALELAEQREKPTWLEVDAGKMEGTFKRKPERTDLSADINEHLIVELYSK</sequence>
<keyword id="KW-1185">Reference proteome</keyword>
<keyword id="KW-0687">Ribonucleoprotein</keyword>
<keyword id="KW-0689">Ribosomal protein</keyword>
<keyword id="KW-0694">RNA-binding</keyword>
<keyword id="KW-0699">rRNA-binding</keyword>
<evidence type="ECO:0000255" key="1">
    <source>
        <dbReference type="HAMAP-Rule" id="MF_01306"/>
    </source>
</evidence>
<evidence type="ECO:0000305" key="2"/>
<feature type="chain" id="PRO_0000322295" description="Small ribosomal subunit protein uS4">
    <location>
        <begin position="1"/>
        <end position="206"/>
    </location>
</feature>
<feature type="domain" description="S4 RNA-binding" evidence="1">
    <location>
        <begin position="96"/>
        <end position="156"/>
    </location>
</feature>
<gene>
    <name evidence="1" type="primary">rpsD</name>
    <name type="ordered locus">ESA_00030</name>
</gene>
<comment type="function">
    <text evidence="1">One of the primary rRNA binding proteins, it binds directly to 16S rRNA where it nucleates assembly of the body of the 30S subunit.</text>
</comment>
<comment type="function">
    <text evidence="1">With S5 and S12 plays an important role in translational accuracy.</text>
</comment>
<comment type="subunit">
    <text evidence="1">Part of the 30S ribosomal subunit. Contacts protein S5. The interaction surface between S4 and S5 is involved in control of translational fidelity.</text>
</comment>
<comment type="similarity">
    <text evidence="1">Belongs to the universal ribosomal protein uS4 family.</text>
</comment>
<organism>
    <name type="scientific">Cronobacter sakazakii (strain ATCC BAA-894)</name>
    <name type="common">Enterobacter sakazakii</name>
    <dbReference type="NCBI Taxonomy" id="290339"/>
    <lineage>
        <taxon>Bacteria</taxon>
        <taxon>Pseudomonadati</taxon>
        <taxon>Pseudomonadota</taxon>
        <taxon>Gammaproteobacteria</taxon>
        <taxon>Enterobacterales</taxon>
        <taxon>Enterobacteriaceae</taxon>
        <taxon>Cronobacter</taxon>
    </lineage>
</organism>
<proteinExistence type="inferred from homology"/>
<accession>A7MPF7</accession>
<name>RS4_CROS8</name>
<protein>
    <recommendedName>
        <fullName evidence="1">Small ribosomal subunit protein uS4</fullName>
    </recommendedName>
    <alternativeName>
        <fullName evidence="2">30S ribosomal protein S4</fullName>
    </alternativeName>
</protein>